<dbReference type="EC" id="7.1.2.2" evidence="1"/>
<dbReference type="EMBL" id="AY012452">
    <property type="protein sequence ID" value="AAK14707.1"/>
    <property type="molecule type" value="Genomic_DNA"/>
</dbReference>
<dbReference type="SMR" id="Q9BA69"/>
<dbReference type="GO" id="GO:0009535">
    <property type="term" value="C:chloroplast thylakoid membrane"/>
    <property type="evidence" value="ECO:0007669"/>
    <property type="project" value="UniProtKB-SubCell"/>
</dbReference>
<dbReference type="GO" id="GO:0005739">
    <property type="term" value="C:mitochondrion"/>
    <property type="evidence" value="ECO:0007669"/>
    <property type="project" value="GOC"/>
</dbReference>
<dbReference type="GO" id="GO:0045259">
    <property type="term" value="C:proton-transporting ATP synthase complex"/>
    <property type="evidence" value="ECO:0007669"/>
    <property type="project" value="UniProtKB-KW"/>
</dbReference>
<dbReference type="GO" id="GO:0005524">
    <property type="term" value="F:ATP binding"/>
    <property type="evidence" value="ECO:0007669"/>
    <property type="project" value="UniProtKB-UniRule"/>
</dbReference>
<dbReference type="GO" id="GO:0016887">
    <property type="term" value="F:ATP hydrolysis activity"/>
    <property type="evidence" value="ECO:0007669"/>
    <property type="project" value="InterPro"/>
</dbReference>
<dbReference type="GO" id="GO:0046933">
    <property type="term" value="F:proton-transporting ATP synthase activity, rotational mechanism"/>
    <property type="evidence" value="ECO:0007669"/>
    <property type="project" value="UniProtKB-UniRule"/>
</dbReference>
<dbReference type="GO" id="GO:0042776">
    <property type="term" value="P:proton motive force-driven mitochondrial ATP synthesis"/>
    <property type="evidence" value="ECO:0007669"/>
    <property type="project" value="TreeGrafter"/>
</dbReference>
<dbReference type="CDD" id="cd18110">
    <property type="entry name" value="ATP-synt_F1_beta_C"/>
    <property type="match status" value="1"/>
</dbReference>
<dbReference type="CDD" id="cd18115">
    <property type="entry name" value="ATP-synt_F1_beta_N"/>
    <property type="match status" value="1"/>
</dbReference>
<dbReference type="CDD" id="cd01133">
    <property type="entry name" value="F1-ATPase_beta_CD"/>
    <property type="match status" value="1"/>
</dbReference>
<dbReference type="FunFam" id="1.10.1140.10:FF:000001">
    <property type="entry name" value="ATP synthase subunit beta"/>
    <property type="match status" value="1"/>
</dbReference>
<dbReference type="FunFam" id="3.40.50.12240:FF:000006">
    <property type="entry name" value="ATP synthase subunit beta"/>
    <property type="match status" value="1"/>
</dbReference>
<dbReference type="FunFam" id="3.40.50.300:FF:000004">
    <property type="entry name" value="ATP synthase subunit beta"/>
    <property type="match status" value="1"/>
</dbReference>
<dbReference type="FunFam" id="2.40.10.170:FF:000002">
    <property type="entry name" value="ATP synthase subunit beta, chloroplastic"/>
    <property type="match status" value="1"/>
</dbReference>
<dbReference type="Gene3D" id="2.40.10.170">
    <property type="match status" value="1"/>
</dbReference>
<dbReference type="Gene3D" id="1.10.1140.10">
    <property type="entry name" value="Bovine Mitochondrial F1-atpase, Atp Synthase Beta Chain, Chain D, domain 3"/>
    <property type="match status" value="1"/>
</dbReference>
<dbReference type="Gene3D" id="3.40.50.300">
    <property type="entry name" value="P-loop containing nucleotide triphosphate hydrolases"/>
    <property type="match status" value="1"/>
</dbReference>
<dbReference type="HAMAP" id="MF_01347">
    <property type="entry name" value="ATP_synth_beta_bact"/>
    <property type="match status" value="1"/>
</dbReference>
<dbReference type="InterPro" id="IPR003593">
    <property type="entry name" value="AAA+_ATPase"/>
</dbReference>
<dbReference type="InterPro" id="IPR055190">
    <property type="entry name" value="ATP-synt_VA_C"/>
</dbReference>
<dbReference type="InterPro" id="IPR005722">
    <property type="entry name" value="ATP_synth_F1_bsu"/>
</dbReference>
<dbReference type="InterPro" id="IPR020003">
    <property type="entry name" value="ATPase_a/bsu_AS"/>
</dbReference>
<dbReference type="InterPro" id="IPR050053">
    <property type="entry name" value="ATPase_alpha/beta_chains"/>
</dbReference>
<dbReference type="InterPro" id="IPR004100">
    <property type="entry name" value="ATPase_F1/V1/A1_a/bsu_N"/>
</dbReference>
<dbReference type="InterPro" id="IPR036121">
    <property type="entry name" value="ATPase_F1/V1/A1_a/bsu_N_sf"/>
</dbReference>
<dbReference type="InterPro" id="IPR000194">
    <property type="entry name" value="ATPase_F1/V1/A1_a/bsu_nucl-bd"/>
</dbReference>
<dbReference type="InterPro" id="IPR024034">
    <property type="entry name" value="ATPase_F1/V1_b/a_C"/>
</dbReference>
<dbReference type="InterPro" id="IPR027417">
    <property type="entry name" value="P-loop_NTPase"/>
</dbReference>
<dbReference type="NCBIfam" id="TIGR01039">
    <property type="entry name" value="atpD"/>
    <property type="match status" value="1"/>
</dbReference>
<dbReference type="PANTHER" id="PTHR15184">
    <property type="entry name" value="ATP SYNTHASE"/>
    <property type="match status" value="1"/>
</dbReference>
<dbReference type="PANTHER" id="PTHR15184:SF71">
    <property type="entry name" value="ATP SYNTHASE SUBUNIT BETA, MITOCHONDRIAL"/>
    <property type="match status" value="1"/>
</dbReference>
<dbReference type="Pfam" id="PF00006">
    <property type="entry name" value="ATP-synt_ab"/>
    <property type="match status" value="1"/>
</dbReference>
<dbReference type="Pfam" id="PF02874">
    <property type="entry name" value="ATP-synt_ab_N"/>
    <property type="match status" value="1"/>
</dbReference>
<dbReference type="Pfam" id="PF22919">
    <property type="entry name" value="ATP-synt_VA_C"/>
    <property type="match status" value="1"/>
</dbReference>
<dbReference type="SMART" id="SM00382">
    <property type="entry name" value="AAA"/>
    <property type="match status" value="1"/>
</dbReference>
<dbReference type="SUPFAM" id="SSF47917">
    <property type="entry name" value="C-terminal domain of alpha and beta subunits of F1 ATP synthase"/>
    <property type="match status" value="1"/>
</dbReference>
<dbReference type="SUPFAM" id="SSF50615">
    <property type="entry name" value="N-terminal domain of alpha and beta subunits of F1 ATP synthase"/>
    <property type="match status" value="1"/>
</dbReference>
<dbReference type="SUPFAM" id="SSF52540">
    <property type="entry name" value="P-loop containing nucleoside triphosphate hydrolases"/>
    <property type="match status" value="1"/>
</dbReference>
<dbReference type="PROSITE" id="PS00152">
    <property type="entry name" value="ATPASE_ALPHA_BETA"/>
    <property type="match status" value="1"/>
</dbReference>
<accession>Q9BA69</accession>
<feature type="chain" id="PRO_0000254471" description="ATP synthase subunit beta, chloroplastic">
    <location>
        <begin position="1"/>
        <end position="498"/>
    </location>
</feature>
<feature type="binding site" evidence="1">
    <location>
        <begin position="172"/>
        <end position="179"/>
    </location>
    <ligand>
        <name>ATP</name>
        <dbReference type="ChEBI" id="CHEBI:30616"/>
    </ligand>
</feature>
<gene>
    <name evidence="1" type="primary">atpB</name>
</gene>
<comment type="function">
    <text evidence="1">Produces ATP from ADP in the presence of a proton gradient across the membrane. The catalytic sites are hosted primarily by the beta subunits.</text>
</comment>
<comment type="catalytic activity">
    <reaction evidence="1">
        <text>ATP + H2O + 4 H(+)(in) = ADP + phosphate + 5 H(+)(out)</text>
        <dbReference type="Rhea" id="RHEA:57720"/>
        <dbReference type="ChEBI" id="CHEBI:15377"/>
        <dbReference type="ChEBI" id="CHEBI:15378"/>
        <dbReference type="ChEBI" id="CHEBI:30616"/>
        <dbReference type="ChEBI" id="CHEBI:43474"/>
        <dbReference type="ChEBI" id="CHEBI:456216"/>
        <dbReference type="EC" id="7.1.2.2"/>
    </reaction>
</comment>
<comment type="subunit">
    <text evidence="1">F-type ATPases have 2 components, CF(1) - the catalytic core - and CF(0) - the membrane proton channel. CF(1) has five subunits: alpha(3), beta(3), gamma(1), delta(1), epsilon(1). CF(0) has four main subunits: a(1), b(1), b'(1) and c(9-12).</text>
</comment>
<comment type="subcellular location">
    <subcellularLocation>
        <location evidence="1">Plastid</location>
        <location evidence="1">Chloroplast thylakoid membrane</location>
        <topology evidence="1">Peripheral membrane protein</topology>
    </subcellularLocation>
</comment>
<comment type="similarity">
    <text evidence="1">Belongs to the ATPase alpha/beta chains family.</text>
</comment>
<sequence>MRTNPTTSSPVVPTLEEKNLGRIAQIIGPVLDVVFPPGKMPNIYNALVVKGRDTVGQQINVTCEVQQLLGNNRVRAVAMSATDGLMRGMEVIDTGAPLSVPVGGATLGRIFNVLGEPVDNLGPVDTRTTSPIHRSAPAFIQLDTKLSIFETGIKVVDLLAPYRRGGKIGLFGGAGVGKTVLIMELINNIAKAHGGVSVFGGVGERTREGNDLYMEMKESGVINEKNIAESKVALVYGQMNEPPGARMRVGLTALTMAEYFRDVNEQDVLLFIDNIFRFVQAGSEVSALLGRMPSAVGYQPTLSTEMGSLQERITSTKEGSITSIQAVYVPADDLTDPAPATTFAHLDATTVLSRVLAAKGIYPAVDPLDSTSTMLQPRIVGEEHYETAQRVKQTSQRYKELQDIIAILGLDELSEEDRLTVARARKIERFLSQPFFVAEVFTGSPGKYVGLAETIRGFQLILSGELDGLPEQAFYLVGNIDEATAKAMNLEVESKLKK</sequence>
<evidence type="ECO:0000255" key="1">
    <source>
        <dbReference type="HAMAP-Rule" id="MF_01347"/>
    </source>
</evidence>
<geneLocation type="chloroplast"/>
<proteinExistence type="inferred from homology"/>
<name>ATPB_ELAOL</name>
<reference key="1">
    <citation type="journal article" date="2002" name="Syst. Biol.">
        <title>A molecular phylogenetic study of the Palmae (Arecaceae) based on atpB, rbcL, and 18S nrDNA sequences.</title>
        <authorList>
            <person name="Hahn W.J."/>
        </authorList>
    </citation>
    <scope>NUCLEOTIDE SEQUENCE [GENOMIC DNA]</scope>
</reference>
<keyword id="KW-0066">ATP synthesis</keyword>
<keyword id="KW-0067">ATP-binding</keyword>
<keyword id="KW-0139">CF(1)</keyword>
<keyword id="KW-0150">Chloroplast</keyword>
<keyword id="KW-0375">Hydrogen ion transport</keyword>
<keyword id="KW-0406">Ion transport</keyword>
<keyword id="KW-0472">Membrane</keyword>
<keyword id="KW-0547">Nucleotide-binding</keyword>
<keyword id="KW-0934">Plastid</keyword>
<keyword id="KW-0793">Thylakoid</keyword>
<keyword id="KW-1278">Translocase</keyword>
<keyword id="KW-0813">Transport</keyword>
<protein>
    <recommendedName>
        <fullName evidence="1">ATP synthase subunit beta, chloroplastic</fullName>
        <ecNumber evidence="1">7.1.2.2</ecNumber>
    </recommendedName>
    <alternativeName>
        <fullName evidence="1">ATP synthase F1 sector subunit beta</fullName>
    </alternativeName>
    <alternativeName>
        <fullName evidence="1">F-ATPase subunit beta</fullName>
    </alternativeName>
</protein>
<organism>
    <name type="scientific">Elaeis oleifera</name>
    <name type="common">American oil palm</name>
    <name type="synonym">Corozo oleifera</name>
    <dbReference type="NCBI Taxonomy" id="80265"/>
    <lineage>
        <taxon>Eukaryota</taxon>
        <taxon>Viridiplantae</taxon>
        <taxon>Streptophyta</taxon>
        <taxon>Embryophyta</taxon>
        <taxon>Tracheophyta</taxon>
        <taxon>Spermatophyta</taxon>
        <taxon>Magnoliopsida</taxon>
        <taxon>Liliopsida</taxon>
        <taxon>Arecaceae</taxon>
        <taxon>Arecoideae</taxon>
        <taxon>Cocoseae</taxon>
        <taxon>Elaeidinae</taxon>
        <taxon>Elaeis</taxon>
    </lineage>
</organism>